<organism>
    <name type="scientific">Arabidopsis thaliana</name>
    <name type="common">Mouse-ear cress</name>
    <dbReference type="NCBI Taxonomy" id="3702"/>
    <lineage>
        <taxon>Eukaryota</taxon>
        <taxon>Viridiplantae</taxon>
        <taxon>Streptophyta</taxon>
        <taxon>Embryophyta</taxon>
        <taxon>Tracheophyta</taxon>
        <taxon>Spermatophyta</taxon>
        <taxon>Magnoliopsida</taxon>
        <taxon>eudicotyledons</taxon>
        <taxon>Gunneridae</taxon>
        <taxon>Pentapetalae</taxon>
        <taxon>rosids</taxon>
        <taxon>malvids</taxon>
        <taxon>Brassicales</taxon>
        <taxon>Brassicaceae</taxon>
        <taxon>Camelineae</taxon>
        <taxon>Arabidopsis</taxon>
    </lineage>
</organism>
<reference key="1">
    <citation type="journal article" date="1999" name="Nature">
        <title>Sequence and analysis of chromosome 4 of the plant Arabidopsis thaliana.</title>
        <authorList>
            <person name="Mayer K.F.X."/>
            <person name="Schueller C."/>
            <person name="Wambutt R."/>
            <person name="Murphy G."/>
            <person name="Volckaert G."/>
            <person name="Pohl T."/>
            <person name="Duesterhoeft A."/>
            <person name="Stiekema W."/>
            <person name="Entian K.-D."/>
            <person name="Terryn N."/>
            <person name="Harris B."/>
            <person name="Ansorge W."/>
            <person name="Brandt P."/>
            <person name="Grivell L.A."/>
            <person name="Rieger M."/>
            <person name="Weichselgartner M."/>
            <person name="de Simone V."/>
            <person name="Obermaier B."/>
            <person name="Mache R."/>
            <person name="Mueller M."/>
            <person name="Kreis M."/>
            <person name="Delseny M."/>
            <person name="Puigdomenech P."/>
            <person name="Watson M."/>
            <person name="Schmidtheini T."/>
            <person name="Reichert B."/>
            <person name="Portetelle D."/>
            <person name="Perez-Alonso M."/>
            <person name="Boutry M."/>
            <person name="Bancroft I."/>
            <person name="Vos P."/>
            <person name="Hoheisel J."/>
            <person name="Zimmermann W."/>
            <person name="Wedler H."/>
            <person name="Ridley P."/>
            <person name="Langham S.-A."/>
            <person name="McCullagh B."/>
            <person name="Bilham L."/>
            <person name="Robben J."/>
            <person name="van der Schueren J."/>
            <person name="Grymonprez B."/>
            <person name="Chuang Y.-J."/>
            <person name="Vandenbussche F."/>
            <person name="Braeken M."/>
            <person name="Weltjens I."/>
            <person name="Voet M."/>
            <person name="Bastiaens I."/>
            <person name="Aert R."/>
            <person name="Defoor E."/>
            <person name="Weitzenegger T."/>
            <person name="Bothe G."/>
            <person name="Ramsperger U."/>
            <person name="Hilbert H."/>
            <person name="Braun M."/>
            <person name="Holzer E."/>
            <person name="Brandt A."/>
            <person name="Peters S."/>
            <person name="van Staveren M."/>
            <person name="Dirkse W."/>
            <person name="Mooijman P."/>
            <person name="Klein Lankhorst R."/>
            <person name="Rose M."/>
            <person name="Hauf J."/>
            <person name="Koetter P."/>
            <person name="Berneiser S."/>
            <person name="Hempel S."/>
            <person name="Feldpausch M."/>
            <person name="Lamberth S."/>
            <person name="Van den Daele H."/>
            <person name="De Keyser A."/>
            <person name="Buysshaert C."/>
            <person name="Gielen J."/>
            <person name="Villarroel R."/>
            <person name="De Clercq R."/>
            <person name="van Montagu M."/>
            <person name="Rogers J."/>
            <person name="Cronin A."/>
            <person name="Quail M.A."/>
            <person name="Bray-Allen S."/>
            <person name="Clark L."/>
            <person name="Doggett J."/>
            <person name="Hall S."/>
            <person name="Kay M."/>
            <person name="Lennard N."/>
            <person name="McLay K."/>
            <person name="Mayes R."/>
            <person name="Pettett A."/>
            <person name="Rajandream M.A."/>
            <person name="Lyne M."/>
            <person name="Benes V."/>
            <person name="Rechmann S."/>
            <person name="Borkova D."/>
            <person name="Bloecker H."/>
            <person name="Scharfe M."/>
            <person name="Grimm M."/>
            <person name="Loehnert T.-H."/>
            <person name="Dose S."/>
            <person name="de Haan M."/>
            <person name="Maarse A.C."/>
            <person name="Schaefer M."/>
            <person name="Mueller-Auer S."/>
            <person name="Gabel C."/>
            <person name="Fuchs M."/>
            <person name="Fartmann B."/>
            <person name="Granderath K."/>
            <person name="Dauner D."/>
            <person name="Herzl A."/>
            <person name="Neumann S."/>
            <person name="Argiriou A."/>
            <person name="Vitale D."/>
            <person name="Liguori R."/>
            <person name="Piravandi E."/>
            <person name="Massenet O."/>
            <person name="Quigley F."/>
            <person name="Clabauld G."/>
            <person name="Muendlein A."/>
            <person name="Felber R."/>
            <person name="Schnabl S."/>
            <person name="Hiller R."/>
            <person name="Schmidt W."/>
            <person name="Lecharny A."/>
            <person name="Aubourg S."/>
            <person name="Chefdor F."/>
            <person name="Cooke R."/>
            <person name="Berger C."/>
            <person name="Monfort A."/>
            <person name="Casacuberta E."/>
            <person name="Gibbons T."/>
            <person name="Weber N."/>
            <person name="Vandenbol M."/>
            <person name="Bargues M."/>
            <person name="Terol J."/>
            <person name="Torres A."/>
            <person name="Perez-Perez A."/>
            <person name="Purnelle B."/>
            <person name="Bent E."/>
            <person name="Johnson S."/>
            <person name="Tacon D."/>
            <person name="Jesse T."/>
            <person name="Heijnen L."/>
            <person name="Schwarz S."/>
            <person name="Scholler P."/>
            <person name="Heber S."/>
            <person name="Francs P."/>
            <person name="Bielke C."/>
            <person name="Frishman D."/>
            <person name="Haase D."/>
            <person name="Lemcke K."/>
            <person name="Mewes H.-W."/>
            <person name="Stocker S."/>
            <person name="Zaccaria P."/>
            <person name="Bevan M."/>
            <person name="Wilson R.K."/>
            <person name="de la Bastide M."/>
            <person name="Habermann K."/>
            <person name="Parnell L."/>
            <person name="Dedhia N."/>
            <person name="Gnoj L."/>
            <person name="Schutz K."/>
            <person name="Huang E."/>
            <person name="Spiegel L."/>
            <person name="Sekhon M."/>
            <person name="Murray J."/>
            <person name="Sheet P."/>
            <person name="Cordes M."/>
            <person name="Abu-Threideh J."/>
            <person name="Stoneking T."/>
            <person name="Kalicki J."/>
            <person name="Graves T."/>
            <person name="Harmon G."/>
            <person name="Edwards J."/>
            <person name="Latreille P."/>
            <person name="Courtney L."/>
            <person name="Cloud J."/>
            <person name="Abbott A."/>
            <person name="Scott K."/>
            <person name="Johnson D."/>
            <person name="Minx P."/>
            <person name="Bentley D."/>
            <person name="Fulton B."/>
            <person name="Miller N."/>
            <person name="Greco T."/>
            <person name="Kemp K."/>
            <person name="Kramer J."/>
            <person name="Fulton L."/>
            <person name="Mardis E."/>
            <person name="Dante M."/>
            <person name="Pepin K."/>
            <person name="Hillier L.W."/>
            <person name="Nelson J."/>
            <person name="Spieth J."/>
            <person name="Ryan E."/>
            <person name="Andrews S."/>
            <person name="Geisel C."/>
            <person name="Layman D."/>
            <person name="Du H."/>
            <person name="Ali J."/>
            <person name="Berghoff A."/>
            <person name="Jones K."/>
            <person name="Drone K."/>
            <person name="Cotton M."/>
            <person name="Joshu C."/>
            <person name="Antonoiu B."/>
            <person name="Zidanic M."/>
            <person name="Strong C."/>
            <person name="Sun H."/>
            <person name="Lamar B."/>
            <person name="Yordan C."/>
            <person name="Ma P."/>
            <person name="Zhong J."/>
            <person name="Preston R."/>
            <person name="Vil D."/>
            <person name="Shekher M."/>
            <person name="Matero A."/>
            <person name="Shah R."/>
            <person name="Swaby I.K."/>
            <person name="O'Shaughnessy A."/>
            <person name="Rodriguez M."/>
            <person name="Hoffman J."/>
            <person name="Till S."/>
            <person name="Granat S."/>
            <person name="Shohdy N."/>
            <person name="Hasegawa A."/>
            <person name="Hameed A."/>
            <person name="Lodhi M."/>
            <person name="Johnson A."/>
            <person name="Chen E."/>
            <person name="Marra M.A."/>
            <person name="Martienssen R."/>
            <person name="McCombie W.R."/>
        </authorList>
    </citation>
    <scope>NUCLEOTIDE SEQUENCE [LARGE SCALE GENOMIC DNA]</scope>
    <source>
        <strain>cv. Columbia</strain>
    </source>
</reference>
<reference key="2">
    <citation type="journal article" date="2017" name="Plant J.">
        <title>Araport11: a complete reannotation of the Arabidopsis thaliana reference genome.</title>
        <authorList>
            <person name="Cheng C.Y."/>
            <person name="Krishnakumar V."/>
            <person name="Chan A.P."/>
            <person name="Thibaud-Nissen F."/>
            <person name="Schobel S."/>
            <person name="Town C.D."/>
        </authorList>
    </citation>
    <scope>GENOME REANNOTATION</scope>
    <source>
        <strain>cv. Columbia</strain>
    </source>
</reference>
<reference key="3">
    <citation type="journal article" date="2003" name="Science">
        <title>Empirical analysis of transcriptional activity in the Arabidopsis genome.</title>
        <authorList>
            <person name="Yamada K."/>
            <person name="Lim J."/>
            <person name="Dale J.M."/>
            <person name="Chen H."/>
            <person name="Shinn P."/>
            <person name="Palm C.J."/>
            <person name="Southwick A.M."/>
            <person name="Wu H.C."/>
            <person name="Kim C.J."/>
            <person name="Nguyen M."/>
            <person name="Pham P.K."/>
            <person name="Cheuk R.F."/>
            <person name="Karlin-Newmann G."/>
            <person name="Liu S.X."/>
            <person name="Lam B."/>
            <person name="Sakano H."/>
            <person name="Wu T."/>
            <person name="Yu G."/>
            <person name="Miranda M."/>
            <person name="Quach H.L."/>
            <person name="Tripp M."/>
            <person name="Chang C.H."/>
            <person name="Lee J.M."/>
            <person name="Toriumi M.J."/>
            <person name="Chan M.M."/>
            <person name="Tang C.C."/>
            <person name="Onodera C.S."/>
            <person name="Deng J.M."/>
            <person name="Akiyama K."/>
            <person name="Ansari Y."/>
            <person name="Arakawa T."/>
            <person name="Banh J."/>
            <person name="Banno F."/>
            <person name="Bowser L."/>
            <person name="Brooks S.Y."/>
            <person name="Carninci P."/>
            <person name="Chao Q."/>
            <person name="Choy N."/>
            <person name="Enju A."/>
            <person name="Goldsmith A.D."/>
            <person name="Gurjal M."/>
            <person name="Hansen N.F."/>
            <person name="Hayashizaki Y."/>
            <person name="Johnson-Hopson C."/>
            <person name="Hsuan V.W."/>
            <person name="Iida K."/>
            <person name="Karnes M."/>
            <person name="Khan S."/>
            <person name="Koesema E."/>
            <person name="Ishida J."/>
            <person name="Jiang P.X."/>
            <person name="Jones T."/>
            <person name="Kawai J."/>
            <person name="Kamiya A."/>
            <person name="Meyers C."/>
            <person name="Nakajima M."/>
            <person name="Narusaka M."/>
            <person name="Seki M."/>
            <person name="Sakurai T."/>
            <person name="Satou M."/>
            <person name="Tamse R."/>
            <person name="Vaysberg M."/>
            <person name="Wallender E.K."/>
            <person name="Wong C."/>
            <person name="Yamamura Y."/>
            <person name="Yuan S."/>
            <person name="Shinozaki K."/>
            <person name="Davis R.W."/>
            <person name="Theologis A."/>
            <person name="Ecker J.R."/>
        </authorList>
    </citation>
    <scope>NUCLEOTIDE SEQUENCE [LARGE SCALE MRNA]</scope>
    <source>
        <strain>cv. Columbia</strain>
    </source>
</reference>
<reference key="4">
    <citation type="journal article" date="2005" name="J. Biol. Chem.">
        <title>Cullins 3a and 3b assemble with members of the broad complex/tramtrack/bric-a-brac (BTB) protein family to form essential ubiquitin-protein ligases (E3s) in Arabidopsis.</title>
        <authorList>
            <person name="Gingerich D.J."/>
            <person name="Gagne J.M."/>
            <person name="Salter D.W."/>
            <person name="Hellmann H."/>
            <person name="Estelle M."/>
            <person name="Ma L."/>
            <person name="Vierstra R.D."/>
        </authorList>
    </citation>
    <scope>DOMAIN BTB</scope>
</reference>
<dbReference type="EMBL" id="AL022198">
    <property type="protein sequence ID" value="CAA18199.1"/>
    <property type="molecule type" value="Genomic_DNA"/>
</dbReference>
<dbReference type="EMBL" id="AL161578">
    <property type="protein sequence ID" value="CAB79812.1"/>
    <property type="molecule type" value="Genomic_DNA"/>
</dbReference>
<dbReference type="EMBL" id="CP002687">
    <property type="protein sequence ID" value="AEE85833.1"/>
    <property type="molecule type" value="Genomic_DNA"/>
</dbReference>
<dbReference type="EMBL" id="AF428394">
    <property type="protein sequence ID" value="AAL16162.1"/>
    <property type="molecule type" value="mRNA"/>
</dbReference>
<dbReference type="EMBL" id="AY133576">
    <property type="protein sequence ID" value="AAM91406.1"/>
    <property type="molecule type" value="mRNA"/>
</dbReference>
<dbReference type="PIR" id="C85362">
    <property type="entry name" value="C85362"/>
</dbReference>
<dbReference type="RefSeq" id="NP_194823.1">
    <property type="nucleotide sequence ID" value="NM_119242.3"/>
</dbReference>
<dbReference type="SMR" id="O65555"/>
<dbReference type="BioGRID" id="14506">
    <property type="interactions" value="2"/>
</dbReference>
<dbReference type="FunCoup" id="O65555">
    <property type="interactions" value="673"/>
</dbReference>
<dbReference type="IntAct" id="O65555">
    <property type="interactions" value="5"/>
</dbReference>
<dbReference type="STRING" id="3702.O65555"/>
<dbReference type="iPTMnet" id="O65555"/>
<dbReference type="PaxDb" id="3702-AT4G30940.1"/>
<dbReference type="ProteomicsDB" id="243152"/>
<dbReference type="EnsemblPlants" id="AT4G30940.1">
    <property type="protein sequence ID" value="AT4G30940.1"/>
    <property type="gene ID" value="AT4G30940"/>
</dbReference>
<dbReference type="GeneID" id="829219"/>
<dbReference type="Gramene" id="AT4G30940.1">
    <property type="protein sequence ID" value="AT4G30940.1"/>
    <property type="gene ID" value="AT4G30940"/>
</dbReference>
<dbReference type="KEGG" id="ath:AT4G30940"/>
<dbReference type="Araport" id="AT4G30940"/>
<dbReference type="TAIR" id="AT4G30940"/>
<dbReference type="eggNOG" id="KOG2714">
    <property type="taxonomic scope" value="Eukaryota"/>
</dbReference>
<dbReference type="HOGENOM" id="CLU_045194_1_0_1"/>
<dbReference type="InParanoid" id="O65555"/>
<dbReference type="OMA" id="GWIDSGN"/>
<dbReference type="OrthoDB" id="2414723at2759"/>
<dbReference type="PhylomeDB" id="O65555"/>
<dbReference type="UniPathway" id="UPA00143"/>
<dbReference type="PRO" id="PR:O65555"/>
<dbReference type="Proteomes" id="UP000006548">
    <property type="component" value="Chromosome 4"/>
</dbReference>
<dbReference type="ExpressionAtlas" id="O65555">
    <property type="expression patterns" value="baseline and differential"/>
</dbReference>
<dbReference type="GO" id="GO:0051260">
    <property type="term" value="P:protein homooligomerization"/>
    <property type="evidence" value="ECO:0007669"/>
    <property type="project" value="InterPro"/>
</dbReference>
<dbReference type="GO" id="GO:0016567">
    <property type="term" value="P:protein ubiquitination"/>
    <property type="evidence" value="ECO:0007669"/>
    <property type="project" value="UniProtKB-UniPathway"/>
</dbReference>
<dbReference type="CDD" id="cd18316">
    <property type="entry name" value="BTB_POZ_KCTD-like"/>
    <property type="match status" value="1"/>
</dbReference>
<dbReference type="Gene3D" id="3.30.710.10">
    <property type="entry name" value="Potassium Channel Kv1.1, Chain A"/>
    <property type="match status" value="1"/>
</dbReference>
<dbReference type="Gene3D" id="2.130.10.10">
    <property type="entry name" value="YVTN repeat-like/Quinoprotein amine dehydrogenase"/>
    <property type="match status" value="1"/>
</dbReference>
<dbReference type="InterPro" id="IPR000210">
    <property type="entry name" value="BTB/POZ_dom"/>
</dbReference>
<dbReference type="InterPro" id="IPR011333">
    <property type="entry name" value="SKP1/BTB/POZ_sf"/>
</dbReference>
<dbReference type="InterPro" id="IPR003131">
    <property type="entry name" value="T1-type_BTB"/>
</dbReference>
<dbReference type="InterPro" id="IPR015943">
    <property type="entry name" value="WD40/YVTN_repeat-like_dom_sf"/>
</dbReference>
<dbReference type="InterPro" id="IPR036322">
    <property type="entry name" value="WD40_repeat_dom_sf"/>
</dbReference>
<dbReference type="PANTHER" id="PTHR14499:SF116">
    <property type="entry name" value="OSJNBA0029H02.24 PROTEIN"/>
    <property type="match status" value="1"/>
</dbReference>
<dbReference type="PANTHER" id="PTHR14499">
    <property type="entry name" value="POTASSIUM CHANNEL TETRAMERIZATION DOMAIN-CONTAINING"/>
    <property type="match status" value="1"/>
</dbReference>
<dbReference type="Pfam" id="PF25279">
    <property type="entry name" value="Beta_prop_At2g24240"/>
    <property type="match status" value="1"/>
</dbReference>
<dbReference type="Pfam" id="PF02214">
    <property type="entry name" value="BTB_2"/>
    <property type="match status" value="1"/>
</dbReference>
<dbReference type="SMART" id="SM00225">
    <property type="entry name" value="BTB"/>
    <property type="match status" value="1"/>
</dbReference>
<dbReference type="SUPFAM" id="SSF54695">
    <property type="entry name" value="POZ domain"/>
    <property type="match status" value="1"/>
</dbReference>
<dbReference type="SUPFAM" id="SSF50978">
    <property type="entry name" value="WD40 repeat-like"/>
    <property type="match status" value="1"/>
</dbReference>
<dbReference type="PROSITE" id="PS50097">
    <property type="entry name" value="BTB"/>
    <property type="match status" value="1"/>
</dbReference>
<gene>
    <name type="ordered locus">At4g30940</name>
    <name type="ORF">F6I18.150</name>
</gene>
<sequence length="441" mass="49052">MGLSNDRIKFNVGGRIFETTATTLANAGRDSFFGALFDENWNLSQPGDLFIDRNPDCFAVLLDLLRTGDLNIPPNIPERLLHKEAMFYGLIDHLRTAKWGPFDGNRLHLSRSVTGIAPGDGTAIRAGPDGGCCIAHGSVVHVFDWMLEEHPTINLDYQRVNDVGWIDSGNIVLSACERLGRGDGGMGLFSSSSGELRYKFQVSHDNQVKSYSAGALSFSPDSKIFTSCKGRSNEYGIGVWDQSTGKQVDFFYESPGWSLGDADKLQWLSGKNCLLVATLFPRKDNCYISLLDFREKNMVWSWSDIGFLTMAEEKRVRDAIAMEESNSICVVNEFEDLGFIDLRMDGGGSSVRWSSRSRLMKSKMPDEPCYPKLALHEGQLFSSMNDSISVFCGSDWVLTSRLKRSYGGSICDFSIGGDRLFALHSEENVFDVWETLPPPII</sequence>
<proteinExistence type="evidence at transcript level"/>
<evidence type="ECO:0000250" key="1"/>
<evidence type="ECO:0000255" key="2">
    <source>
        <dbReference type="PROSITE-ProRule" id="PRU00037"/>
    </source>
</evidence>
<evidence type="ECO:0000269" key="3">
    <source>
    </source>
</evidence>
<accession>O65555</accession>
<comment type="function">
    <text evidence="1">May act as a substrate-specific adapter of an E3 ubiquitin-protein ligase complex (CUL3-RBX1-BTB) which mediates the ubiquitination and subsequent proteasomal degradation of target proteins.</text>
</comment>
<comment type="pathway">
    <text>Protein modification; protein ubiquitination.</text>
</comment>
<comment type="domain">
    <text evidence="3">The BTB/POZ domain mediates the interaction with some component of ubiquitin ligase complexes.</text>
</comment>
<keyword id="KW-1185">Reference proteome</keyword>
<keyword id="KW-0833">Ubl conjugation pathway</keyword>
<feature type="chain" id="PRO_0000405331" description="BTB/POZ domain-containing protein At4g30940">
    <location>
        <begin position="1"/>
        <end position="441"/>
    </location>
</feature>
<feature type="domain" description="BTB" evidence="2">
    <location>
        <begin position="6"/>
        <end position="74"/>
    </location>
</feature>
<protein>
    <recommendedName>
        <fullName>BTB/POZ domain-containing protein At4g30940</fullName>
    </recommendedName>
</protein>
<name>Y4094_ARATH</name>